<accession>Q1GSC9</accession>
<proteinExistence type="inferred from homology"/>
<protein>
    <recommendedName>
        <fullName evidence="1">SsrA-binding protein</fullName>
    </recommendedName>
    <alternativeName>
        <fullName evidence="1">Small protein B</fullName>
    </alternativeName>
</protein>
<organism>
    <name type="scientific">Sphingopyxis alaskensis (strain DSM 13593 / LMG 18877 / RB2256)</name>
    <name type="common">Sphingomonas alaskensis</name>
    <dbReference type="NCBI Taxonomy" id="317655"/>
    <lineage>
        <taxon>Bacteria</taxon>
        <taxon>Pseudomonadati</taxon>
        <taxon>Pseudomonadota</taxon>
        <taxon>Alphaproteobacteria</taxon>
        <taxon>Sphingomonadales</taxon>
        <taxon>Sphingomonadaceae</taxon>
        <taxon>Sphingopyxis</taxon>
    </lineage>
</organism>
<reference key="1">
    <citation type="journal article" date="2009" name="Proc. Natl. Acad. Sci. U.S.A.">
        <title>The genomic basis of trophic strategy in marine bacteria.</title>
        <authorList>
            <person name="Lauro F.M."/>
            <person name="McDougald D."/>
            <person name="Thomas T."/>
            <person name="Williams T.J."/>
            <person name="Egan S."/>
            <person name="Rice S."/>
            <person name="DeMaere M.Z."/>
            <person name="Ting L."/>
            <person name="Ertan H."/>
            <person name="Johnson J."/>
            <person name="Ferriera S."/>
            <person name="Lapidus A."/>
            <person name="Anderson I."/>
            <person name="Kyrpides N."/>
            <person name="Munk A.C."/>
            <person name="Detter C."/>
            <person name="Han C.S."/>
            <person name="Brown M.V."/>
            <person name="Robb F.T."/>
            <person name="Kjelleberg S."/>
            <person name="Cavicchioli R."/>
        </authorList>
    </citation>
    <scope>NUCLEOTIDE SEQUENCE [LARGE SCALE GENOMIC DNA]</scope>
    <source>
        <strain>DSM 13593 / LMG 18877 / RB2256</strain>
    </source>
</reference>
<feature type="chain" id="PRO_1000002153" description="SsrA-binding protein">
    <location>
        <begin position="1"/>
        <end position="161"/>
    </location>
</feature>
<feature type="region of interest" description="Disordered" evidence="2">
    <location>
        <begin position="140"/>
        <end position="161"/>
    </location>
</feature>
<sequence length="161" mass="18482">MVRPQSAAEFDKKKVVAENRRARFDYAIEQVFEAGIALQGTEVKSLRFGEGTIAESYAEVNGGEVWLINANIPEFSHGNRFNHEPKRPRKLLLNWREINKLHAGVARQGMTLVPLSVYFNSRGRAKVELALAKGKKAHDKRESIKERDWKRDKQRLLKDRG</sequence>
<keyword id="KW-0963">Cytoplasm</keyword>
<keyword id="KW-1185">Reference proteome</keyword>
<keyword id="KW-0694">RNA-binding</keyword>
<evidence type="ECO:0000255" key="1">
    <source>
        <dbReference type="HAMAP-Rule" id="MF_00023"/>
    </source>
</evidence>
<evidence type="ECO:0000256" key="2">
    <source>
        <dbReference type="SAM" id="MobiDB-lite"/>
    </source>
</evidence>
<dbReference type="EMBL" id="CP000356">
    <property type="protein sequence ID" value="ABF53443.1"/>
    <property type="molecule type" value="Genomic_DNA"/>
</dbReference>
<dbReference type="RefSeq" id="WP_011542023.1">
    <property type="nucleotide sequence ID" value="NC_008048.1"/>
</dbReference>
<dbReference type="SMR" id="Q1GSC9"/>
<dbReference type="STRING" id="317655.Sala_1730"/>
<dbReference type="KEGG" id="sal:Sala_1730"/>
<dbReference type="eggNOG" id="COG0691">
    <property type="taxonomic scope" value="Bacteria"/>
</dbReference>
<dbReference type="HOGENOM" id="CLU_108953_0_1_5"/>
<dbReference type="OrthoDB" id="9805462at2"/>
<dbReference type="Proteomes" id="UP000006578">
    <property type="component" value="Chromosome"/>
</dbReference>
<dbReference type="GO" id="GO:0005829">
    <property type="term" value="C:cytosol"/>
    <property type="evidence" value="ECO:0007669"/>
    <property type="project" value="TreeGrafter"/>
</dbReference>
<dbReference type="GO" id="GO:0003723">
    <property type="term" value="F:RNA binding"/>
    <property type="evidence" value="ECO:0007669"/>
    <property type="project" value="UniProtKB-UniRule"/>
</dbReference>
<dbReference type="GO" id="GO:0070929">
    <property type="term" value="P:trans-translation"/>
    <property type="evidence" value="ECO:0007669"/>
    <property type="project" value="UniProtKB-UniRule"/>
</dbReference>
<dbReference type="CDD" id="cd09294">
    <property type="entry name" value="SmpB"/>
    <property type="match status" value="1"/>
</dbReference>
<dbReference type="Gene3D" id="2.40.280.10">
    <property type="match status" value="1"/>
</dbReference>
<dbReference type="HAMAP" id="MF_00023">
    <property type="entry name" value="SmpB"/>
    <property type="match status" value="1"/>
</dbReference>
<dbReference type="InterPro" id="IPR023620">
    <property type="entry name" value="SmpB"/>
</dbReference>
<dbReference type="InterPro" id="IPR000037">
    <property type="entry name" value="SsrA-bd_prot"/>
</dbReference>
<dbReference type="InterPro" id="IPR020081">
    <property type="entry name" value="SsrA-bd_prot_CS"/>
</dbReference>
<dbReference type="NCBIfam" id="NF003843">
    <property type="entry name" value="PRK05422.1"/>
    <property type="match status" value="1"/>
</dbReference>
<dbReference type="NCBIfam" id="TIGR00086">
    <property type="entry name" value="smpB"/>
    <property type="match status" value="1"/>
</dbReference>
<dbReference type="PANTHER" id="PTHR30308:SF2">
    <property type="entry name" value="SSRA-BINDING PROTEIN"/>
    <property type="match status" value="1"/>
</dbReference>
<dbReference type="PANTHER" id="PTHR30308">
    <property type="entry name" value="TMRNA-BINDING COMPONENT OF TRANS-TRANSLATION TAGGING COMPLEX"/>
    <property type="match status" value="1"/>
</dbReference>
<dbReference type="Pfam" id="PF01668">
    <property type="entry name" value="SmpB"/>
    <property type="match status" value="1"/>
</dbReference>
<dbReference type="SUPFAM" id="SSF74982">
    <property type="entry name" value="Small protein B (SmpB)"/>
    <property type="match status" value="1"/>
</dbReference>
<dbReference type="PROSITE" id="PS01317">
    <property type="entry name" value="SSRP"/>
    <property type="match status" value="1"/>
</dbReference>
<comment type="function">
    <text evidence="1">Required for rescue of stalled ribosomes mediated by trans-translation. Binds to transfer-messenger RNA (tmRNA), required for stable association of tmRNA with ribosomes. tmRNA and SmpB together mimic tRNA shape, replacing the anticodon stem-loop with SmpB. tmRNA is encoded by the ssrA gene; the 2 termini fold to resemble tRNA(Ala) and it encodes a 'tag peptide', a short internal open reading frame. During trans-translation Ala-aminoacylated tmRNA acts like a tRNA, entering the A-site of stalled ribosomes, displacing the stalled mRNA. The ribosome then switches to translate the ORF on the tmRNA; the nascent peptide is terminated with the 'tag peptide' encoded by the tmRNA and targeted for degradation. The ribosome is freed to recommence translation, which seems to be the essential function of trans-translation.</text>
</comment>
<comment type="subcellular location">
    <subcellularLocation>
        <location evidence="1">Cytoplasm</location>
    </subcellularLocation>
    <text evidence="1">The tmRNA-SmpB complex associates with stalled 70S ribosomes.</text>
</comment>
<comment type="similarity">
    <text evidence="1">Belongs to the SmpB family.</text>
</comment>
<name>SSRP_SPHAL</name>
<gene>
    <name evidence="1" type="primary">smpB</name>
    <name type="ordered locus">Sala_1730</name>
</gene>